<reference key="1">
    <citation type="journal article" date="2004" name="Nat. Biotechnol.">
        <title>The genome sequence of the anaerobic, sulfate-reducing bacterium Desulfovibrio vulgaris Hildenborough.</title>
        <authorList>
            <person name="Heidelberg J.F."/>
            <person name="Seshadri R."/>
            <person name="Haveman S.A."/>
            <person name="Hemme C.L."/>
            <person name="Paulsen I.T."/>
            <person name="Kolonay J.F."/>
            <person name="Eisen J.A."/>
            <person name="Ward N.L."/>
            <person name="Methe B.A."/>
            <person name="Brinkac L.M."/>
            <person name="Daugherty S.C."/>
            <person name="DeBoy R.T."/>
            <person name="Dodson R.J."/>
            <person name="Durkin A.S."/>
            <person name="Madupu R."/>
            <person name="Nelson W.C."/>
            <person name="Sullivan S.A."/>
            <person name="Fouts D.E."/>
            <person name="Haft D.H."/>
            <person name="Selengut J."/>
            <person name="Peterson J.D."/>
            <person name="Davidsen T.M."/>
            <person name="Zafar N."/>
            <person name="Zhou L."/>
            <person name="Radune D."/>
            <person name="Dimitrov G."/>
            <person name="Hance M."/>
            <person name="Tran K."/>
            <person name="Khouri H.M."/>
            <person name="Gill J."/>
            <person name="Utterback T.R."/>
            <person name="Feldblyum T.V."/>
            <person name="Wall J.D."/>
            <person name="Voordouw G."/>
            <person name="Fraser C.M."/>
        </authorList>
    </citation>
    <scope>NUCLEOTIDE SEQUENCE [LARGE SCALE GENOMIC DNA]</scope>
    <source>
        <strain>ATCC 29579 / DSM 644 / CCUG 34227 / NCIMB 8303 / VKM B-1760 / Hildenborough</strain>
    </source>
</reference>
<organism>
    <name type="scientific">Nitratidesulfovibrio vulgaris (strain ATCC 29579 / DSM 644 / CCUG 34227 / NCIMB 8303 / VKM B-1760 / Hildenborough)</name>
    <name type="common">Desulfovibrio vulgaris</name>
    <dbReference type="NCBI Taxonomy" id="882"/>
    <lineage>
        <taxon>Bacteria</taxon>
        <taxon>Pseudomonadati</taxon>
        <taxon>Thermodesulfobacteriota</taxon>
        <taxon>Desulfovibrionia</taxon>
        <taxon>Desulfovibrionales</taxon>
        <taxon>Desulfovibrionaceae</taxon>
        <taxon>Nitratidesulfovibrio</taxon>
    </lineage>
</organism>
<proteinExistence type="evidence at protein level"/>
<name>PYRB_NITV2</name>
<gene>
    <name evidence="1" type="primary">pyrB</name>
    <name type="ordered locus">DVU_2901</name>
</gene>
<protein>
    <recommendedName>
        <fullName evidence="1">Aspartate carbamoyltransferase catalytic subunit</fullName>
        <ecNumber evidence="1">2.1.3.2</ecNumber>
    </recommendedName>
    <alternativeName>
        <fullName evidence="1">Aspartate transcarbamylase</fullName>
        <shortName evidence="1">ATCase</shortName>
    </alternativeName>
</protein>
<accession>Q727F4</accession>
<keyword id="KW-0665">Pyrimidine biosynthesis</keyword>
<keyword id="KW-1185">Reference proteome</keyword>
<keyword id="KW-0808">Transferase</keyword>
<sequence length="317" mass="34649">MQNETRSLWPHKDLLDVDQLSKDELLHLLDTAAQFHEINRRPVKKVPTLKGKSVILFFAEPSTRTKTSFDVAGKRLSADTFSLAKSGSSLQKGESLKDTALTLEAMNPDVLVIRHSSSGAARFLAERLACGVVNAGDGWHAHPTQALLDCYSLRQVWGDTFEGRTLCILGDIAHSRVARSNVKLLTSLGVRVRLCAPRTLLPAGVGNWPVEVFTDLDAAVRDADAVMCLRLQLERQQAGLLPDLREYSNRYCLTPRRLELAKPEAKVLHPGPMNRGLEIASSIADAPASLVLDQVAAGVATRMAILFLLATRTDGGR</sequence>
<comment type="function">
    <text evidence="1">Catalyzes the condensation of carbamoyl phosphate and aspartate to form carbamoyl aspartate and inorganic phosphate, the committed step in the de novo pyrimidine nucleotide biosynthesis pathway.</text>
</comment>
<comment type="catalytic activity">
    <reaction evidence="1">
        <text>carbamoyl phosphate + L-aspartate = N-carbamoyl-L-aspartate + phosphate + H(+)</text>
        <dbReference type="Rhea" id="RHEA:20013"/>
        <dbReference type="ChEBI" id="CHEBI:15378"/>
        <dbReference type="ChEBI" id="CHEBI:29991"/>
        <dbReference type="ChEBI" id="CHEBI:32814"/>
        <dbReference type="ChEBI" id="CHEBI:43474"/>
        <dbReference type="ChEBI" id="CHEBI:58228"/>
        <dbReference type="EC" id="2.1.3.2"/>
    </reaction>
</comment>
<comment type="pathway">
    <text evidence="1">Pyrimidine metabolism; UMP biosynthesis via de novo pathway; (S)-dihydroorotate from bicarbonate: step 2/3.</text>
</comment>
<comment type="subunit">
    <text evidence="1">Heterododecamer (2C3:3R2) of six catalytic PyrB chains organized as two trimers (C3), and six regulatory PyrI chains organized as three dimers (R2).</text>
</comment>
<comment type="interaction">
    <interactant intactId="EBI-10066379">
        <id>Q727F4</id>
    </interactant>
    <interactant intactId="EBI-10066383">
        <id>Q727F3</id>
        <label>pyrC</label>
    </interactant>
    <organismsDiffer>false</organismsDiffer>
    <experiments>4</experiments>
</comment>
<comment type="similarity">
    <text evidence="1">Belongs to the aspartate/ornithine carbamoyltransferase superfamily. ATCase family.</text>
</comment>
<evidence type="ECO:0000255" key="1">
    <source>
        <dbReference type="HAMAP-Rule" id="MF_00001"/>
    </source>
</evidence>
<feature type="chain" id="PRO_0000113127" description="Aspartate carbamoyltransferase catalytic subunit">
    <location>
        <begin position="1"/>
        <end position="317"/>
    </location>
</feature>
<feature type="binding site" evidence="1">
    <location>
        <position position="64"/>
    </location>
    <ligand>
        <name>carbamoyl phosphate</name>
        <dbReference type="ChEBI" id="CHEBI:58228"/>
    </ligand>
</feature>
<feature type="binding site" evidence="1">
    <location>
        <position position="65"/>
    </location>
    <ligand>
        <name>carbamoyl phosphate</name>
        <dbReference type="ChEBI" id="CHEBI:58228"/>
    </ligand>
</feature>
<feature type="binding site" evidence="1">
    <location>
        <position position="92"/>
    </location>
    <ligand>
        <name>L-aspartate</name>
        <dbReference type="ChEBI" id="CHEBI:29991"/>
    </ligand>
</feature>
<feature type="binding site" evidence="1">
    <location>
        <position position="114"/>
    </location>
    <ligand>
        <name>carbamoyl phosphate</name>
        <dbReference type="ChEBI" id="CHEBI:58228"/>
    </ligand>
</feature>
<feature type="binding site" evidence="1">
    <location>
        <position position="142"/>
    </location>
    <ligand>
        <name>carbamoyl phosphate</name>
        <dbReference type="ChEBI" id="CHEBI:58228"/>
    </ligand>
</feature>
<feature type="binding site" evidence="1">
    <location>
        <position position="145"/>
    </location>
    <ligand>
        <name>carbamoyl phosphate</name>
        <dbReference type="ChEBI" id="CHEBI:58228"/>
    </ligand>
</feature>
<feature type="binding site" evidence="1">
    <location>
        <position position="176"/>
    </location>
    <ligand>
        <name>L-aspartate</name>
        <dbReference type="ChEBI" id="CHEBI:29991"/>
    </ligand>
</feature>
<feature type="binding site" evidence="1">
    <location>
        <position position="230"/>
    </location>
    <ligand>
        <name>L-aspartate</name>
        <dbReference type="ChEBI" id="CHEBI:29991"/>
    </ligand>
</feature>
<feature type="binding site" evidence="1">
    <location>
        <position position="271"/>
    </location>
    <ligand>
        <name>carbamoyl phosphate</name>
        <dbReference type="ChEBI" id="CHEBI:58228"/>
    </ligand>
</feature>
<feature type="binding site" evidence="1">
    <location>
        <position position="272"/>
    </location>
    <ligand>
        <name>carbamoyl phosphate</name>
        <dbReference type="ChEBI" id="CHEBI:58228"/>
    </ligand>
</feature>
<dbReference type="EC" id="2.1.3.2" evidence="1"/>
<dbReference type="EMBL" id="AE017285">
    <property type="protein sequence ID" value="AAS97373.1"/>
    <property type="molecule type" value="Genomic_DNA"/>
</dbReference>
<dbReference type="RefSeq" id="WP_010940161.1">
    <property type="nucleotide sequence ID" value="NC_002937.3"/>
</dbReference>
<dbReference type="RefSeq" id="YP_012113.1">
    <property type="nucleotide sequence ID" value="NC_002937.3"/>
</dbReference>
<dbReference type="SMR" id="Q727F4"/>
<dbReference type="IntAct" id="Q727F4">
    <property type="interactions" value="4"/>
</dbReference>
<dbReference type="STRING" id="882.DVU_2901"/>
<dbReference type="PaxDb" id="882-DVU_2901"/>
<dbReference type="EnsemblBacteria" id="AAS97373">
    <property type="protein sequence ID" value="AAS97373"/>
    <property type="gene ID" value="DVU_2901"/>
</dbReference>
<dbReference type="KEGG" id="dvu:DVU_2901"/>
<dbReference type="PATRIC" id="fig|882.5.peg.2623"/>
<dbReference type="eggNOG" id="COG0540">
    <property type="taxonomic scope" value="Bacteria"/>
</dbReference>
<dbReference type="HOGENOM" id="CLU_043846_2_0_7"/>
<dbReference type="OrthoDB" id="9774690at2"/>
<dbReference type="PhylomeDB" id="Q727F4"/>
<dbReference type="UniPathway" id="UPA00070">
    <property type="reaction ID" value="UER00116"/>
</dbReference>
<dbReference type="Proteomes" id="UP000002194">
    <property type="component" value="Chromosome"/>
</dbReference>
<dbReference type="GO" id="GO:0005829">
    <property type="term" value="C:cytosol"/>
    <property type="evidence" value="ECO:0007669"/>
    <property type="project" value="TreeGrafter"/>
</dbReference>
<dbReference type="GO" id="GO:0016597">
    <property type="term" value="F:amino acid binding"/>
    <property type="evidence" value="ECO:0007669"/>
    <property type="project" value="InterPro"/>
</dbReference>
<dbReference type="GO" id="GO:0004070">
    <property type="term" value="F:aspartate carbamoyltransferase activity"/>
    <property type="evidence" value="ECO:0007669"/>
    <property type="project" value="UniProtKB-UniRule"/>
</dbReference>
<dbReference type="GO" id="GO:0006207">
    <property type="term" value="P:'de novo' pyrimidine nucleobase biosynthetic process"/>
    <property type="evidence" value="ECO:0007669"/>
    <property type="project" value="InterPro"/>
</dbReference>
<dbReference type="GO" id="GO:0044205">
    <property type="term" value="P:'de novo' UMP biosynthetic process"/>
    <property type="evidence" value="ECO:0007669"/>
    <property type="project" value="UniProtKB-UniRule"/>
</dbReference>
<dbReference type="GO" id="GO:0006520">
    <property type="term" value="P:amino acid metabolic process"/>
    <property type="evidence" value="ECO:0007669"/>
    <property type="project" value="InterPro"/>
</dbReference>
<dbReference type="FunFam" id="3.40.50.1370:FF:000007">
    <property type="entry name" value="Aspartate carbamoyltransferase"/>
    <property type="match status" value="1"/>
</dbReference>
<dbReference type="Gene3D" id="3.40.50.1370">
    <property type="entry name" value="Aspartate/ornithine carbamoyltransferase"/>
    <property type="match status" value="2"/>
</dbReference>
<dbReference type="HAMAP" id="MF_00001">
    <property type="entry name" value="Asp_carb_tr"/>
    <property type="match status" value="1"/>
</dbReference>
<dbReference type="InterPro" id="IPR006132">
    <property type="entry name" value="Asp/Orn_carbamoyltranf_P-bd"/>
</dbReference>
<dbReference type="InterPro" id="IPR006130">
    <property type="entry name" value="Asp/Orn_carbamoylTrfase"/>
</dbReference>
<dbReference type="InterPro" id="IPR036901">
    <property type="entry name" value="Asp/Orn_carbamoylTrfase_sf"/>
</dbReference>
<dbReference type="InterPro" id="IPR002082">
    <property type="entry name" value="Asp_carbamoyltransf"/>
</dbReference>
<dbReference type="InterPro" id="IPR006131">
    <property type="entry name" value="Asp_carbamoyltransf_Asp/Orn-bd"/>
</dbReference>
<dbReference type="NCBIfam" id="TIGR00670">
    <property type="entry name" value="asp_carb_tr"/>
    <property type="match status" value="1"/>
</dbReference>
<dbReference type="NCBIfam" id="NF002032">
    <property type="entry name" value="PRK00856.1"/>
    <property type="match status" value="1"/>
</dbReference>
<dbReference type="PANTHER" id="PTHR45753:SF6">
    <property type="entry name" value="ASPARTATE CARBAMOYLTRANSFERASE"/>
    <property type="match status" value="1"/>
</dbReference>
<dbReference type="PANTHER" id="PTHR45753">
    <property type="entry name" value="ORNITHINE CARBAMOYLTRANSFERASE, MITOCHONDRIAL"/>
    <property type="match status" value="1"/>
</dbReference>
<dbReference type="Pfam" id="PF00185">
    <property type="entry name" value="OTCace"/>
    <property type="match status" value="1"/>
</dbReference>
<dbReference type="Pfam" id="PF02729">
    <property type="entry name" value="OTCace_N"/>
    <property type="match status" value="1"/>
</dbReference>
<dbReference type="PRINTS" id="PR00100">
    <property type="entry name" value="AOTCASE"/>
</dbReference>
<dbReference type="PRINTS" id="PR00101">
    <property type="entry name" value="ATCASE"/>
</dbReference>
<dbReference type="SUPFAM" id="SSF53671">
    <property type="entry name" value="Aspartate/ornithine carbamoyltransferase"/>
    <property type="match status" value="1"/>
</dbReference>
<dbReference type="PROSITE" id="PS00097">
    <property type="entry name" value="CARBAMOYLTRANSFERASE"/>
    <property type="match status" value="1"/>
</dbReference>